<proteinExistence type="evidence at protein level"/>
<name>GPH_AQUAE</name>
<sequence length="213" mass="23896">MRVILFDLDGTLIDSAKDIALALEKTLKELGLEEYYPDNVTKYIGGGVRALLEKVLKDKFREEYVEVFRKHYLENPVVYTKPYPEIPYTLEALKSKGFKLAVVSNKLEELSKKILDILNLSGYFDLIVGGDTFGEKKPSPTPVLKTLEILGEEPEKALIVGDTDADIEAGKRAGTKTALALWGYVKLNSQIPDFTLSRPSDLVKLMDNHIVEF</sequence>
<dbReference type="EC" id="3.1.3.18"/>
<dbReference type="EMBL" id="AE000657">
    <property type="protein sequence ID" value="AAC07313.1"/>
    <property type="molecule type" value="Genomic_DNA"/>
</dbReference>
<dbReference type="PIR" id="D70416">
    <property type="entry name" value="D70416"/>
</dbReference>
<dbReference type="RefSeq" id="NP_213923.1">
    <property type="nucleotide sequence ID" value="NC_000918.1"/>
</dbReference>
<dbReference type="RefSeq" id="WP_010880861.1">
    <property type="nucleotide sequence ID" value="NC_000918.1"/>
</dbReference>
<dbReference type="PDB" id="2NYV">
    <property type="method" value="X-ray"/>
    <property type="resolution" value="2.10 A"/>
    <property type="chains" value="A=2-213"/>
</dbReference>
<dbReference type="PDB" id="2YY6">
    <property type="method" value="X-ray"/>
    <property type="resolution" value="2.30 A"/>
    <property type="chains" value="A/B=1-213"/>
</dbReference>
<dbReference type="PDBsum" id="2NYV"/>
<dbReference type="PDBsum" id="2YY6"/>
<dbReference type="SMR" id="O67359"/>
<dbReference type="FunCoup" id="O67359">
    <property type="interactions" value="384"/>
</dbReference>
<dbReference type="STRING" id="224324.aq_1342"/>
<dbReference type="EnsemblBacteria" id="AAC07313">
    <property type="protein sequence ID" value="AAC07313"/>
    <property type="gene ID" value="aq_1342"/>
</dbReference>
<dbReference type="KEGG" id="aae:aq_1342"/>
<dbReference type="eggNOG" id="COG0546">
    <property type="taxonomic scope" value="Bacteria"/>
</dbReference>
<dbReference type="HOGENOM" id="CLU_045011_19_1_0"/>
<dbReference type="InParanoid" id="O67359"/>
<dbReference type="OrthoDB" id="9807630at2"/>
<dbReference type="BRENDA" id="3.1.3.18">
    <property type="organism ID" value="396"/>
</dbReference>
<dbReference type="UniPathway" id="UPA00865">
    <property type="reaction ID" value="UER00834"/>
</dbReference>
<dbReference type="EvolutionaryTrace" id="O67359"/>
<dbReference type="Proteomes" id="UP000000798">
    <property type="component" value="Chromosome"/>
</dbReference>
<dbReference type="GO" id="GO:0005829">
    <property type="term" value="C:cytosol"/>
    <property type="evidence" value="ECO:0000318"/>
    <property type="project" value="GO_Central"/>
</dbReference>
<dbReference type="GO" id="GO:0046872">
    <property type="term" value="F:metal ion binding"/>
    <property type="evidence" value="ECO:0007669"/>
    <property type="project" value="UniProtKB-KW"/>
</dbReference>
<dbReference type="GO" id="GO:0008967">
    <property type="term" value="F:phosphoglycolate phosphatase activity"/>
    <property type="evidence" value="ECO:0000318"/>
    <property type="project" value="GO_Central"/>
</dbReference>
<dbReference type="GO" id="GO:0005975">
    <property type="term" value="P:carbohydrate metabolic process"/>
    <property type="evidence" value="ECO:0007669"/>
    <property type="project" value="InterPro"/>
</dbReference>
<dbReference type="GO" id="GO:0006281">
    <property type="term" value="P:DNA repair"/>
    <property type="evidence" value="ECO:0000318"/>
    <property type="project" value="GO_Central"/>
</dbReference>
<dbReference type="GO" id="GO:0046295">
    <property type="term" value="P:glycolate biosynthetic process"/>
    <property type="evidence" value="ECO:0007669"/>
    <property type="project" value="UniProtKB-UniRule"/>
</dbReference>
<dbReference type="CDD" id="cd02616">
    <property type="entry name" value="HAD_PPase"/>
    <property type="match status" value="1"/>
</dbReference>
<dbReference type="FunFam" id="3.40.50.1000:FF:000022">
    <property type="entry name" value="Phosphoglycolate phosphatase"/>
    <property type="match status" value="1"/>
</dbReference>
<dbReference type="Gene3D" id="3.40.50.1000">
    <property type="entry name" value="HAD superfamily/HAD-like"/>
    <property type="match status" value="1"/>
</dbReference>
<dbReference type="Gene3D" id="1.10.150.240">
    <property type="entry name" value="Putative phosphatase, domain 2"/>
    <property type="match status" value="1"/>
</dbReference>
<dbReference type="HAMAP" id="MF_00495">
    <property type="entry name" value="GPH_hydrolase_bact"/>
    <property type="match status" value="1"/>
</dbReference>
<dbReference type="InterPro" id="IPR050155">
    <property type="entry name" value="HAD-like_hydrolase_sf"/>
</dbReference>
<dbReference type="InterPro" id="IPR036412">
    <property type="entry name" value="HAD-like_sf"/>
</dbReference>
<dbReference type="InterPro" id="IPR006439">
    <property type="entry name" value="HAD-SF_hydro_IA"/>
</dbReference>
<dbReference type="InterPro" id="IPR041492">
    <property type="entry name" value="HAD_2"/>
</dbReference>
<dbReference type="InterPro" id="IPR023214">
    <property type="entry name" value="HAD_sf"/>
</dbReference>
<dbReference type="InterPro" id="IPR023198">
    <property type="entry name" value="PGP-like_dom2"/>
</dbReference>
<dbReference type="InterPro" id="IPR037512">
    <property type="entry name" value="PGPase_prok"/>
</dbReference>
<dbReference type="NCBIfam" id="TIGR01549">
    <property type="entry name" value="HAD-SF-IA-v1"/>
    <property type="match status" value="1"/>
</dbReference>
<dbReference type="NCBIfam" id="TIGR01509">
    <property type="entry name" value="HAD-SF-IA-v3"/>
    <property type="match status" value="1"/>
</dbReference>
<dbReference type="PANTHER" id="PTHR43434">
    <property type="entry name" value="PHOSPHOGLYCOLATE PHOSPHATASE"/>
    <property type="match status" value="1"/>
</dbReference>
<dbReference type="PANTHER" id="PTHR43434:SF1">
    <property type="entry name" value="PHOSPHOGLYCOLATE PHOSPHATASE"/>
    <property type="match status" value="1"/>
</dbReference>
<dbReference type="Pfam" id="PF13419">
    <property type="entry name" value="HAD_2"/>
    <property type="match status" value="1"/>
</dbReference>
<dbReference type="PRINTS" id="PR00413">
    <property type="entry name" value="HADHALOGNASE"/>
</dbReference>
<dbReference type="SFLD" id="SFLDG01135">
    <property type="entry name" value="C1.5.6:_HAD__Beta-PGM__Phospha"/>
    <property type="match status" value="1"/>
</dbReference>
<dbReference type="SFLD" id="SFLDG01129">
    <property type="entry name" value="C1.5:_HAD__Beta-PGM__Phosphata"/>
    <property type="match status" value="1"/>
</dbReference>
<dbReference type="SUPFAM" id="SSF56784">
    <property type="entry name" value="HAD-like"/>
    <property type="match status" value="1"/>
</dbReference>
<reference key="1">
    <citation type="journal article" date="1998" name="Nature">
        <title>The complete genome of the hyperthermophilic bacterium Aquifex aeolicus.</title>
        <authorList>
            <person name="Deckert G."/>
            <person name="Warren P.V."/>
            <person name="Gaasterland T."/>
            <person name="Young W.G."/>
            <person name="Lenox A.L."/>
            <person name="Graham D.E."/>
            <person name="Overbeek R."/>
            <person name="Snead M.A."/>
            <person name="Keller M."/>
            <person name="Aujay M."/>
            <person name="Huber R."/>
            <person name="Feldman R.A."/>
            <person name="Short J.M."/>
            <person name="Olsen G.J."/>
            <person name="Swanson R.V."/>
        </authorList>
    </citation>
    <scope>NUCLEOTIDE SEQUENCE [LARGE SCALE GENOMIC DNA]</scope>
    <source>
        <strain>VF5</strain>
    </source>
</reference>
<reference key="2">
    <citation type="submission" date="2009-02" db="PDB data bank">
        <title>X-ray crystal structure of a phosphoglycolate phosphatase from Aquifex aeolicus.</title>
        <authorList>
            <consortium name="New York structural genomix research consortium (NYSGXRC)"/>
        </authorList>
    </citation>
    <scope>X-RAY CRYSTALLOGRAPHY (2.1 ANGSTROMS) OF 2-213 IN COMPLEX WITH SUBSTRATE ANALOGS</scope>
    <scope>SUBUNIT</scope>
</reference>
<evidence type="ECO:0000250" key="1"/>
<evidence type="ECO:0000269" key="2">
    <source ref="2"/>
</evidence>
<evidence type="ECO:0000305" key="3"/>
<evidence type="ECO:0007829" key="4">
    <source>
        <dbReference type="PDB" id="2NYV"/>
    </source>
</evidence>
<evidence type="ECO:0007829" key="5">
    <source>
        <dbReference type="PDB" id="2YY6"/>
    </source>
</evidence>
<protein>
    <recommendedName>
        <fullName>Phosphoglycolate phosphatase</fullName>
        <shortName>PGP</shortName>
        <shortName>PGPase</shortName>
        <ecNumber>3.1.3.18</ecNumber>
    </recommendedName>
</protein>
<accession>O67359</accession>
<comment type="function">
    <text evidence="1">Specifically catalyzes the dephosphorylation of 2-phosphoglycolate.</text>
</comment>
<comment type="catalytic activity">
    <reaction>
        <text>2-phosphoglycolate + H2O = glycolate + phosphate</text>
        <dbReference type="Rhea" id="RHEA:14369"/>
        <dbReference type="ChEBI" id="CHEBI:15377"/>
        <dbReference type="ChEBI" id="CHEBI:29805"/>
        <dbReference type="ChEBI" id="CHEBI:43474"/>
        <dbReference type="ChEBI" id="CHEBI:58033"/>
        <dbReference type="EC" id="3.1.3.18"/>
    </reaction>
</comment>
<comment type="cofactor">
    <cofactor evidence="1">
        <name>Mg(2+)</name>
        <dbReference type="ChEBI" id="CHEBI:18420"/>
    </cofactor>
</comment>
<comment type="pathway">
    <text>Organic acid metabolism; glycolate biosynthesis; glycolate from 2-phosphoglycolate: step 1/1.</text>
</comment>
<comment type="subunit">
    <text evidence="2">Homodimer.</text>
</comment>
<comment type="similarity">
    <text evidence="3">Belongs to the HAD-like hydrolase superfamily. CbbY/CbbZ/Gph/YieH family.</text>
</comment>
<keyword id="KW-0002">3D-structure</keyword>
<keyword id="KW-0119">Carbohydrate metabolism</keyword>
<keyword id="KW-0378">Hydrolase</keyword>
<keyword id="KW-0460">Magnesium</keyword>
<keyword id="KW-0479">Metal-binding</keyword>
<keyword id="KW-1185">Reference proteome</keyword>
<gene>
    <name type="primary">gph</name>
    <name type="ordered locus">aq_1342</name>
</gene>
<feature type="chain" id="PRO_0000108025" description="Phosphoglycolate phosphatase">
    <location>
        <begin position="1"/>
        <end position="213"/>
    </location>
</feature>
<feature type="active site" description="Nucleophile" evidence="1">
    <location>
        <position position="7"/>
    </location>
</feature>
<feature type="binding site" evidence="1">
    <location>
        <position position="7"/>
    </location>
    <ligand>
        <name>Mg(2+)</name>
        <dbReference type="ChEBI" id="CHEBI:18420"/>
    </ligand>
</feature>
<feature type="binding site" evidence="1">
    <location>
        <position position="9"/>
    </location>
    <ligand>
        <name>Mg(2+)</name>
        <dbReference type="ChEBI" id="CHEBI:18420"/>
    </ligand>
</feature>
<feature type="binding site">
    <location>
        <begin position="38"/>
        <end position="39"/>
    </location>
    <ligand>
        <name>substrate</name>
    </ligand>
</feature>
<feature type="binding site">
    <location>
        <position position="43"/>
    </location>
    <ligand>
        <name>substrate</name>
    </ligand>
</feature>
<feature type="binding site" evidence="1">
    <location>
        <position position="162"/>
    </location>
    <ligand>
        <name>Mg(2+)</name>
        <dbReference type="ChEBI" id="CHEBI:18420"/>
    </ligand>
</feature>
<feature type="strand" evidence="4">
    <location>
        <begin position="3"/>
        <end position="6"/>
    </location>
</feature>
<feature type="turn" evidence="4">
    <location>
        <begin position="10"/>
        <end position="12"/>
    </location>
</feature>
<feature type="helix" evidence="4">
    <location>
        <begin position="16"/>
        <end position="29"/>
    </location>
</feature>
<feature type="helix" evidence="4">
    <location>
        <begin position="33"/>
        <end position="35"/>
    </location>
</feature>
<feature type="helix" evidence="4">
    <location>
        <begin position="40"/>
        <end position="43"/>
    </location>
</feature>
<feature type="helix" evidence="4">
    <location>
        <begin position="48"/>
        <end position="56"/>
    </location>
</feature>
<feature type="helix" evidence="4">
    <location>
        <begin position="57"/>
        <end position="59"/>
    </location>
</feature>
<feature type="helix" evidence="4">
    <location>
        <begin position="64"/>
        <end position="74"/>
    </location>
</feature>
<feature type="helix" evidence="4">
    <location>
        <begin position="86"/>
        <end position="95"/>
    </location>
</feature>
<feature type="strand" evidence="4">
    <location>
        <begin position="99"/>
        <end position="103"/>
    </location>
</feature>
<feature type="helix" evidence="4">
    <location>
        <begin position="108"/>
        <end position="117"/>
    </location>
</feature>
<feature type="helix" evidence="4">
    <location>
        <begin position="121"/>
        <end position="123"/>
    </location>
</feature>
<feature type="strand" evidence="4">
    <location>
        <begin position="125"/>
        <end position="128"/>
    </location>
</feature>
<feature type="strand" evidence="5">
    <location>
        <begin position="137"/>
        <end position="140"/>
    </location>
</feature>
<feature type="helix" evidence="4">
    <location>
        <begin position="141"/>
        <end position="150"/>
    </location>
</feature>
<feature type="helix" evidence="4">
    <location>
        <begin position="154"/>
        <end position="156"/>
    </location>
</feature>
<feature type="strand" evidence="4">
    <location>
        <begin position="157"/>
        <end position="163"/>
    </location>
</feature>
<feature type="helix" evidence="4">
    <location>
        <begin position="164"/>
        <end position="173"/>
    </location>
</feature>
<feature type="strand" evidence="4">
    <location>
        <begin position="176"/>
        <end position="180"/>
    </location>
</feature>
<feature type="strand" evidence="4">
    <location>
        <begin position="193"/>
        <end position="198"/>
    </location>
</feature>
<feature type="helix" evidence="4">
    <location>
        <begin position="201"/>
        <end position="207"/>
    </location>
</feature>
<feature type="strand" evidence="4">
    <location>
        <begin position="210"/>
        <end position="213"/>
    </location>
</feature>
<organism>
    <name type="scientific">Aquifex aeolicus (strain VF5)</name>
    <dbReference type="NCBI Taxonomy" id="224324"/>
    <lineage>
        <taxon>Bacteria</taxon>
        <taxon>Pseudomonadati</taxon>
        <taxon>Aquificota</taxon>
        <taxon>Aquificia</taxon>
        <taxon>Aquificales</taxon>
        <taxon>Aquificaceae</taxon>
        <taxon>Aquifex</taxon>
    </lineage>
</organism>